<organism>
    <name type="scientific">Pseudomonas syringae pv. tomato (strain ATCC BAA-871 / DC3000)</name>
    <dbReference type="NCBI Taxonomy" id="223283"/>
    <lineage>
        <taxon>Bacteria</taxon>
        <taxon>Pseudomonadati</taxon>
        <taxon>Pseudomonadota</taxon>
        <taxon>Gammaproteobacteria</taxon>
        <taxon>Pseudomonadales</taxon>
        <taxon>Pseudomonadaceae</taxon>
        <taxon>Pseudomonas</taxon>
    </lineage>
</organism>
<evidence type="ECO:0000255" key="1">
    <source>
        <dbReference type="HAMAP-Rule" id="MF_01307"/>
    </source>
</evidence>
<evidence type="ECO:0000305" key="2"/>
<reference key="1">
    <citation type="journal article" date="2003" name="Proc. Natl. Acad. Sci. U.S.A.">
        <title>The complete genome sequence of the Arabidopsis and tomato pathogen Pseudomonas syringae pv. tomato DC3000.</title>
        <authorList>
            <person name="Buell C.R."/>
            <person name="Joardar V."/>
            <person name="Lindeberg M."/>
            <person name="Selengut J."/>
            <person name="Paulsen I.T."/>
            <person name="Gwinn M.L."/>
            <person name="Dodson R.J."/>
            <person name="DeBoy R.T."/>
            <person name="Durkin A.S."/>
            <person name="Kolonay J.F."/>
            <person name="Madupu R."/>
            <person name="Daugherty S.C."/>
            <person name="Brinkac L.M."/>
            <person name="Beanan M.J."/>
            <person name="Haft D.H."/>
            <person name="Nelson W.C."/>
            <person name="Davidsen T.M."/>
            <person name="Zafar N."/>
            <person name="Zhou L."/>
            <person name="Liu J."/>
            <person name="Yuan Q."/>
            <person name="Khouri H.M."/>
            <person name="Fedorova N.B."/>
            <person name="Tran B."/>
            <person name="Russell D."/>
            <person name="Berry K.J."/>
            <person name="Utterback T.R."/>
            <person name="Van Aken S.E."/>
            <person name="Feldblyum T.V."/>
            <person name="D'Ascenzo M."/>
            <person name="Deng W.-L."/>
            <person name="Ramos A.R."/>
            <person name="Alfano J.R."/>
            <person name="Cartinhour S."/>
            <person name="Chatterjee A.K."/>
            <person name="Delaney T.P."/>
            <person name="Lazarowitz S.G."/>
            <person name="Martin G.B."/>
            <person name="Schneider D.J."/>
            <person name="Tang X."/>
            <person name="Bender C.L."/>
            <person name="White O."/>
            <person name="Fraser C.M."/>
            <person name="Collmer A."/>
        </authorList>
    </citation>
    <scope>NUCLEOTIDE SEQUENCE [LARGE SCALE GENOMIC DNA]</scope>
    <source>
        <strain>ATCC BAA-871 / DC3000</strain>
    </source>
</reference>
<gene>
    <name evidence="1" type="primary">rpsE</name>
    <name type="ordered locus">PSPTO_0643</name>
</gene>
<comment type="function">
    <text evidence="1">With S4 and S12 plays an important role in translational accuracy.</text>
</comment>
<comment type="function">
    <text evidence="1">Located at the back of the 30S subunit body where it stabilizes the conformation of the head with respect to the body.</text>
</comment>
<comment type="subunit">
    <text evidence="1">Part of the 30S ribosomal subunit. Contacts proteins S4 and S8.</text>
</comment>
<comment type="domain">
    <text>The N-terminal domain interacts with the head of the 30S subunit; the C-terminal domain interacts with the body and contacts protein S4. The interaction surface between S4 and S5 is involved in control of translational fidelity.</text>
</comment>
<comment type="similarity">
    <text evidence="1">Belongs to the universal ribosomal protein uS5 family.</text>
</comment>
<name>RS5_PSESM</name>
<keyword id="KW-1185">Reference proteome</keyword>
<keyword id="KW-0687">Ribonucleoprotein</keyword>
<keyword id="KW-0689">Ribosomal protein</keyword>
<keyword id="KW-0694">RNA-binding</keyword>
<keyword id="KW-0699">rRNA-binding</keyword>
<protein>
    <recommendedName>
        <fullName evidence="1">Small ribosomal subunit protein uS5</fullName>
    </recommendedName>
    <alternativeName>
        <fullName evidence="2">30S ribosomal protein S5</fullName>
    </alternativeName>
</protein>
<accession>Q889V4</accession>
<feature type="chain" id="PRO_0000131576" description="Small ribosomal subunit protein uS5">
    <location>
        <begin position="1"/>
        <end position="166"/>
    </location>
</feature>
<feature type="domain" description="S5 DRBM" evidence="1">
    <location>
        <begin position="12"/>
        <end position="75"/>
    </location>
</feature>
<proteinExistence type="inferred from homology"/>
<dbReference type="EMBL" id="AE016853">
    <property type="protein sequence ID" value="AAO54185.1"/>
    <property type="molecule type" value="Genomic_DNA"/>
</dbReference>
<dbReference type="RefSeq" id="NP_790490.1">
    <property type="nucleotide sequence ID" value="NC_004578.1"/>
</dbReference>
<dbReference type="RefSeq" id="WP_003317099.1">
    <property type="nucleotide sequence ID" value="NC_004578.1"/>
</dbReference>
<dbReference type="SMR" id="Q889V4"/>
<dbReference type="STRING" id="223283.PSPTO_0643"/>
<dbReference type="GeneID" id="96221013"/>
<dbReference type="KEGG" id="pst:PSPTO_0643"/>
<dbReference type="PATRIC" id="fig|223283.9.peg.649"/>
<dbReference type="eggNOG" id="COG0098">
    <property type="taxonomic scope" value="Bacteria"/>
</dbReference>
<dbReference type="HOGENOM" id="CLU_065898_2_2_6"/>
<dbReference type="OrthoDB" id="9809045at2"/>
<dbReference type="PhylomeDB" id="Q889V4"/>
<dbReference type="Proteomes" id="UP000002515">
    <property type="component" value="Chromosome"/>
</dbReference>
<dbReference type="GO" id="GO:0015935">
    <property type="term" value="C:small ribosomal subunit"/>
    <property type="evidence" value="ECO:0007669"/>
    <property type="project" value="InterPro"/>
</dbReference>
<dbReference type="GO" id="GO:0019843">
    <property type="term" value="F:rRNA binding"/>
    <property type="evidence" value="ECO:0007669"/>
    <property type="project" value="UniProtKB-UniRule"/>
</dbReference>
<dbReference type="GO" id="GO:0003735">
    <property type="term" value="F:structural constituent of ribosome"/>
    <property type="evidence" value="ECO:0007669"/>
    <property type="project" value="InterPro"/>
</dbReference>
<dbReference type="GO" id="GO:0006412">
    <property type="term" value="P:translation"/>
    <property type="evidence" value="ECO:0007669"/>
    <property type="project" value="UniProtKB-UniRule"/>
</dbReference>
<dbReference type="FunFam" id="3.30.160.20:FF:000001">
    <property type="entry name" value="30S ribosomal protein S5"/>
    <property type="match status" value="1"/>
</dbReference>
<dbReference type="FunFam" id="3.30.230.10:FF:000002">
    <property type="entry name" value="30S ribosomal protein S5"/>
    <property type="match status" value="1"/>
</dbReference>
<dbReference type="Gene3D" id="3.30.160.20">
    <property type="match status" value="1"/>
</dbReference>
<dbReference type="Gene3D" id="3.30.230.10">
    <property type="match status" value="1"/>
</dbReference>
<dbReference type="HAMAP" id="MF_01307_B">
    <property type="entry name" value="Ribosomal_uS5_B"/>
    <property type="match status" value="1"/>
</dbReference>
<dbReference type="InterPro" id="IPR020568">
    <property type="entry name" value="Ribosomal_Su5_D2-typ_SF"/>
</dbReference>
<dbReference type="InterPro" id="IPR000851">
    <property type="entry name" value="Ribosomal_uS5"/>
</dbReference>
<dbReference type="InterPro" id="IPR005712">
    <property type="entry name" value="Ribosomal_uS5_bac-type"/>
</dbReference>
<dbReference type="InterPro" id="IPR005324">
    <property type="entry name" value="Ribosomal_uS5_C"/>
</dbReference>
<dbReference type="InterPro" id="IPR013810">
    <property type="entry name" value="Ribosomal_uS5_N"/>
</dbReference>
<dbReference type="InterPro" id="IPR018192">
    <property type="entry name" value="Ribosomal_uS5_N_CS"/>
</dbReference>
<dbReference type="InterPro" id="IPR014721">
    <property type="entry name" value="Ribsml_uS5_D2-typ_fold_subgr"/>
</dbReference>
<dbReference type="NCBIfam" id="TIGR01021">
    <property type="entry name" value="rpsE_bact"/>
    <property type="match status" value="1"/>
</dbReference>
<dbReference type="PANTHER" id="PTHR48432">
    <property type="entry name" value="S5 DRBM DOMAIN-CONTAINING PROTEIN"/>
    <property type="match status" value="1"/>
</dbReference>
<dbReference type="PANTHER" id="PTHR48432:SF1">
    <property type="entry name" value="S5 DRBM DOMAIN-CONTAINING PROTEIN"/>
    <property type="match status" value="1"/>
</dbReference>
<dbReference type="Pfam" id="PF00333">
    <property type="entry name" value="Ribosomal_S5"/>
    <property type="match status" value="1"/>
</dbReference>
<dbReference type="Pfam" id="PF03719">
    <property type="entry name" value="Ribosomal_S5_C"/>
    <property type="match status" value="1"/>
</dbReference>
<dbReference type="SUPFAM" id="SSF54768">
    <property type="entry name" value="dsRNA-binding domain-like"/>
    <property type="match status" value="1"/>
</dbReference>
<dbReference type="SUPFAM" id="SSF54211">
    <property type="entry name" value="Ribosomal protein S5 domain 2-like"/>
    <property type="match status" value="1"/>
</dbReference>
<dbReference type="PROSITE" id="PS00585">
    <property type="entry name" value="RIBOSOMAL_S5"/>
    <property type="match status" value="1"/>
</dbReference>
<dbReference type="PROSITE" id="PS50881">
    <property type="entry name" value="S5_DSRBD"/>
    <property type="match status" value="1"/>
</dbReference>
<sequence length="166" mass="17733">MSNHDQKRDEGYIEKLVQVNRVAKTVKGGRIFTFTALTVVGDGKGRVGFGRGKSREVPAAIQKAMEAARRNMIQVDLNGTTLQYAMKSAHGASKVYMQPASEGTGIIAGGAMRAVLEVAGVQNVLAKCYGSTNPVNVVHATFKGLKGMQSPESIAAKRGKRVEEII</sequence>